<proteinExistence type="inferred from homology"/>
<gene>
    <name evidence="1" type="primary">rpsD</name>
    <name type="ordered locus">BURPS668_3721</name>
</gene>
<comment type="function">
    <text evidence="1">One of the primary rRNA binding proteins, it binds directly to 16S rRNA where it nucleates assembly of the body of the 30S subunit.</text>
</comment>
<comment type="function">
    <text evidence="1">With S5 and S12 plays an important role in translational accuracy.</text>
</comment>
<comment type="subunit">
    <text evidence="1">Part of the 30S ribosomal subunit. Contacts protein S5. The interaction surface between S4 and S5 is involved in control of translational fidelity.</text>
</comment>
<comment type="similarity">
    <text evidence="1">Belongs to the universal ribosomal protein uS4 family.</text>
</comment>
<evidence type="ECO:0000255" key="1">
    <source>
        <dbReference type="HAMAP-Rule" id="MF_01306"/>
    </source>
</evidence>
<evidence type="ECO:0000305" key="2"/>
<name>RS4_BURP6</name>
<accession>A3NEF4</accession>
<reference key="1">
    <citation type="journal article" date="2010" name="Genome Biol. Evol.">
        <title>Continuing evolution of Burkholderia mallei through genome reduction and large-scale rearrangements.</title>
        <authorList>
            <person name="Losada L."/>
            <person name="Ronning C.M."/>
            <person name="DeShazer D."/>
            <person name="Woods D."/>
            <person name="Fedorova N."/>
            <person name="Kim H.S."/>
            <person name="Shabalina S.A."/>
            <person name="Pearson T.R."/>
            <person name="Brinkac L."/>
            <person name="Tan P."/>
            <person name="Nandi T."/>
            <person name="Crabtree J."/>
            <person name="Badger J."/>
            <person name="Beckstrom-Sternberg S."/>
            <person name="Saqib M."/>
            <person name="Schutzer S.E."/>
            <person name="Keim P."/>
            <person name="Nierman W.C."/>
        </authorList>
    </citation>
    <scope>NUCLEOTIDE SEQUENCE [LARGE SCALE GENOMIC DNA]</scope>
    <source>
        <strain>668</strain>
    </source>
</reference>
<keyword id="KW-0687">Ribonucleoprotein</keyword>
<keyword id="KW-0689">Ribosomal protein</keyword>
<keyword id="KW-0694">RNA-binding</keyword>
<keyword id="KW-0699">rRNA-binding</keyword>
<dbReference type="EMBL" id="CP000570">
    <property type="protein sequence ID" value="ABN82276.1"/>
    <property type="molecule type" value="Genomic_DNA"/>
</dbReference>
<dbReference type="RefSeq" id="WP_004197926.1">
    <property type="nucleotide sequence ID" value="NC_009074.1"/>
</dbReference>
<dbReference type="SMR" id="A3NEF4"/>
<dbReference type="GeneID" id="93061807"/>
<dbReference type="KEGG" id="bpd:BURPS668_3721"/>
<dbReference type="HOGENOM" id="CLU_092403_0_2_4"/>
<dbReference type="GO" id="GO:0015935">
    <property type="term" value="C:small ribosomal subunit"/>
    <property type="evidence" value="ECO:0007669"/>
    <property type="project" value="InterPro"/>
</dbReference>
<dbReference type="GO" id="GO:0019843">
    <property type="term" value="F:rRNA binding"/>
    <property type="evidence" value="ECO:0007669"/>
    <property type="project" value="UniProtKB-UniRule"/>
</dbReference>
<dbReference type="GO" id="GO:0003735">
    <property type="term" value="F:structural constituent of ribosome"/>
    <property type="evidence" value="ECO:0007669"/>
    <property type="project" value="InterPro"/>
</dbReference>
<dbReference type="GO" id="GO:0042274">
    <property type="term" value="P:ribosomal small subunit biogenesis"/>
    <property type="evidence" value="ECO:0007669"/>
    <property type="project" value="TreeGrafter"/>
</dbReference>
<dbReference type="GO" id="GO:0006412">
    <property type="term" value="P:translation"/>
    <property type="evidence" value="ECO:0007669"/>
    <property type="project" value="UniProtKB-UniRule"/>
</dbReference>
<dbReference type="CDD" id="cd00165">
    <property type="entry name" value="S4"/>
    <property type="match status" value="1"/>
</dbReference>
<dbReference type="FunFam" id="1.10.1050.10:FF:000001">
    <property type="entry name" value="30S ribosomal protein S4"/>
    <property type="match status" value="1"/>
</dbReference>
<dbReference type="FunFam" id="3.10.290.10:FF:000001">
    <property type="entry name" value="30S ribosomal protein S4"/>
    <property type="match status" value="1"/>
</dbReference>
<dbReference type="Gene3D" id="1.10.1050.10">
    <property type="entry name" value="Ribosomal Protein S4 Delta 41, Chain A, domain 1"/>
    <property type="match status" value="1"/>
</dbReference>
<dbReference type="Gene3D" id="3.10.290.10">
    <property type="entry name" value="RNA-binding S4 domain"/>
    <property type="match status" value="1"/>
</dbReference>
<dbReference type="HAMAP" id="MF_01306_B">
    <property type="entry name" value="Ribosomal_uS4_B"/>
    <property type="match status" value="1"/>
</dbReference>
<dbReference type="InterPro" id="IPR022801">
    <property type="entry name" value="Ribosomal_uS4"/>
</dbReference>
<dbReference type="InterPro" id="IPR005709">
    <property type="entry name" value="Ribosomal_uS4_bac-type"/>
</dbReference>
<dbReference type="InterPro" id="IPR018079">
    <property type="entry name" value="Ribosomal_uS4_CS"/>
</dbReference>
<dbReference type="InterPro" id="IPR001912">
    <property type="entry name" value="Ribosomal_uS4_N"/>
</dbReference>
<dbReference type="InterPro" id="IPR002942">
    <property type="entry name" value="S4_RNA-bd"/>
</dbReference>
<dbReference type="InterPro" id="IPR036986">
    <property type="entry name" value="S4_RNA-bd_sf"/>
</dbReference>
<dbReference type="NCBIfam" id="NF003717">
    <property type="entry name" value="PRK05327.1"/>
    <property type="match status" value="1"/>
</dbReference>
<dbReference type="NCBIfam" id="TIGR01017">
    <property type="entry name" value="rpsD_bact"/>
    <property type="match status" value="1"/>
</dbReference>
<dbReference type="PANTHER" id="PTHR11831">
    <property type="entry name" value="30S 40S RIBOSOMAL PROTEIN"/>
    <property type="match status" value="1"/>
</dbReference>
<dbReference type="PANTHER" id="PTHR11831:SF4">
    <property type="entry name" value="SMALL RIBOSOMAL SUBUNIT PROTEIN US4M"/>
    <property type="match status" value="1"/>
</dbReference>
<dbReference type="Pfam" id="PF00163">
    <property type="entry name" value="Ribosomal_S4"/>
    <property type="match status" value="1"/>
</dbReference>
<dbReference type="Pfam" id="PF01479">
    <property type="entry name" value="S4"/>
    <property type="match status" value="1"/>
</dbReference>
<dbReference type="SMART" id="SM01390">
    <property type="entry name" value="Ribosomal_S4"/>
    <property type="match status" value="1"/>
</dbReference>
<dbReference type="SMART" id="SM00363">
    <property type="entry name" value="S4"/>
    <property type="match status" value="1"/>
</dbReference>
<dbReference type="SUPFAM" id="SSF55174">
    <property type="entry name" value="Alpha-L RNA-binding motif"/>
    <property type="match status" value="1"/>
</dbReference>
<dbReference type="PROSITE" id="PS00632">
    <property type="entry name" value="RIBOSOMAL_S4"/>
    <property type="match status" value="1"/>
</dbReference>
<dbReference type="PROSITE" id="PS50889">
    <property type="entry name" value="S4"/>
    <property type="match status" value="1"/>
</dbReference>
<sequence>MARYIGPKAKLSRREGTDLFLKSARRSLADKCKLDSKPGQHGRISGARTSDYGTQLREKQKVKRIYGVLERQFRRYFAEADRRKGNTGETLLQLLESRLDNVVYRMGFGSTRAEARQLVSHKAITVNGIVANIPSQQVKAGDVVAIREKAKKQARIVEALSLAEQGGMPSWVAVDAKKFEGTFKQVPERADIAGDINESLIVELYSR</sequence>
<protein>
    <recommendedName>
        <fullName evidence="1">Small ribosomal subunit protein uS4</fullName>
    </recommendedName>
    <alternativeName>
        <fullName evidence="2">30S ribosomal protein S4</fullName>
    </alternativeName>
</protein>
<feature type="chain" id="PRO_0000322276" description="Small ribosomal subunit protein uS4">
    <location>
        <begin position="1"/>
        <end position="207"/>
    </location>
</feature>
<feature type="domain" description="S4 RNA-binding" evidence="1">
    <location>
        <begin position="97"/>
        <end position="160"/>
    </location>
</feature>
<organism>
    <name type="scientific">Burkholderia pseudomallei (strain 668)</name>
    <dbReference type="NCBI Taxonomy" id="320373"/>
    <lineage>
        <taxon>Bacteria</taxon>
        <taxon>Pseudomonadati</taxon>
        <taxon>Pseudomonadota</taxon>
        <taxon>Betaproteobacteria</taxon>
        <taxon>Burkholderiales</taxon>
        <taxon>Burkholderiaceae</taxon>
        <taxon>Burkholderia</taxon>
        <taxon>pseudomallei group</taxon>
    </lineage>
</organism>